<reference key="1">
    <citation type="journal article" date="2002" name="Nature">
        <title>Sequence of Plasmodium falciparum chromosomes 1, 3-9 and 13.</title>
        <authorList>
            <person name="Hall N."/>
            <person name="Pain A."/>
            <person name="Berriman M."/>
            <person name="Churcher C.M."/>
            <person name="Harris B."/>
            <person name="Harris D."/>
            <person name="Mungall K.L."/>
            <person name="Bowman S."/>
            <person name="Atkin R."/>
            <person name="Baker S."/>
            <person name="Barron A."/>
            <person name="Brooks K."/>
            <person name="Buckee C.O."/>
            <person name="Burrows C."/>
            <person name="Cherevach I."/>
            <person name="Chillingworth C."/>
            <person name="Chillingworth T."/>
            <person name="Christodoulou Z."/>
            <person name="Clark L."/>
            <person name="Clark R."/>
            <person name="Corton C."/>
            <person name="Cronin A."/>
            <person name="Davies R.M."/>
            <person name="Davis P."/>
            <person name="Dear P."/>
            <person name="Dearden F."/>
            <person name="Doggett J."/>
            <person name="Feltwell T."/>
            <person name="Goble A."/>
            <person name="Goodhead I."/>
            <person name="Gwilliam R."/>
            <person name="Hamlin N."/>
            <person name="Hance Z."/>
            <person name="Harper D."/>
            <person name="Hauser H."/>
            <person name="Hornsby T."/>
            <person name="Holroyd S."/>
            <person name="Horrocks P."/>
            <person name="Humphray S."/>
            <person name="Jagels K."/>
            <person name="James K.D."/>
            <person name="Johnson D."/>
            <person name="Kerhornou A."/>
            <person name="Knights A."/>
            <person name="Konfortov B."/>
            <person name="Kyes S."/>
            <person name="Larke N."/>
            <person name="Lawson D."/>
            <person name="Lennard N."/>
            <person name="Line A."/>
            <person name="Maddison M."/>
            <person name="Mclean J."/>
            <person name="Mooney P."/>
            <person name="Moule S."/>
            <person name="Murphy L."/>
            <person name="Oliver K."/>
            <person name="Ormond D."/>
            <person name="Price C."/>
            <person name="Quail M.A."/>
            <person name="Rabbinowitsch E."/>
            <person name="Rajandream M.A."/>
            <person name="Rutter S."/>
            <person name="Rutherford K.M."/>
            <person name="Sanders M."/>
            <person name="Simmonds M."/>
            <person name="Seeger K."/>
            <person name="Sharp S."/>
            <person name="Smith R."/>
            <person name="Squares R."/>
            <person name="Squares S."/>
            <person name="Stevens K."/>
            <person name="Taylor K."/>
            <person name="Tivey A."/>
            <person name="Unwin L."/>
            <person name="Whitehead S."/>
            <person name="Woodward J.R."/>
            <person name="Sulston J.E."/>
            <person name="Craig A."/>
            <person name="Newbold C."/>
            <person name="Barrell B.G."/>
        </authorList>
    </citation>
    <scope>NUCLEOTIDE SEQUENCE [LARGE SCALE GENOMIC DNA]</scope>
    <source>
        <strain>3D7</strain>
    </source>
</reference>
<reference key="2">
    <citation type="journal article" date="2002" name="Nature">
        <title>Genome sequence of the human malaria parasite Plasmodium falciparum.</title>
        <authorList>
            <person name="Gardner M.J."/>
            <person name="Hall N."/>
            <person name="Fung E."/>
            <person name="White O."/>
            <person name="Berriman M."/>
            <person name="Hyman R.W."/>
            <person name="Carlton J.M."/>
            <person name="Pain A."/>
            <person name="Nelson K.E."/>
            <person name="Bowman S."/>
            <person name="Paulsen I.T."/>
            <person name="James K.D."/>
            <person name="Eisen J.A."/>
            <person name="Rutherford K.M."/>
            <person name="Salzberg S.L."/>
            <person name="Craig A."/>
            <person name="Kyes S."/>
            <person name="Chan M.-S."/>
            <person name="Nene V."/>
            <person name="Shallom S.J."/>
            <person name="Suh B."/>
            <person name="Peterson J."/>
            <person name="Angiuoli S."/>
            <person name="Pertea M."/>
            <person name="Allen J."/>
            <person name="Selengut J."/>
            <person name="Haft D."/>
            <person name="Mather M.W."/>
            <person name="Vaidya A.B."/>
            <person name="Martin D.M.A."/>
            <person name="Fairlamb A.H."/>
            <person name="Fraunholz M.J."/>
            <person name="Roos D.S."/>
            <person name="Ralph S.A."/>
            <person name="McFadden G.I."/>
            <person name="Cummings L.M."/>
            <person name="Subramanian G.M."/>
            <person name="Mungall C."/>
            <person name="Venter J.C."/>
            <person name="Carucci D.J."/>
            <person name="Hoffman S.L."/>
            <person name="Newbold C."/>
            <person name="Davis R.W."/>
            <person name="Fraser C.M."/>
            <person name="Barrell B.G."/>
        </authorList>
    </citation>
    <scope>NUCLEOTIDE SEQUENCE [LARGE SCALE GENOMIC DNA]</scope>
    <source>
        <strain>3D7</strain>
    </source>
</reference>
<dbReference type="EMBL" id="AL844507">
    <property type="protein sequence ID" value="CAX64153.1"/>
    <property type="molecule type" value="Genomic_DNA"/>
</dbReference>
<dbReference type="RefSeq" id="XP_002808875.1">
    <property type="nucleotide sequence ID" value="XM_002808829.1"/>
</dbReference>
<dbReference type="STRING" id="36329.C0H4X5"/>
<dbReference type="DrugBank" id="DB11638">
    <property type="generic name" value="Artenimol"/>
</dbReference>
<dbReference type="SwissPalm" id="C0H4X5"/>
<dbReference type="PaxDb" id="5833-MAL8P1.31"/>
<dbReference type="EnsemblProtists" id="CAX64153">
    <property type="protein sequence ID" value="CAX64153"/>
    <property type="gene ID" value="PF3D7_0824600"/>
</dbReference>
<dbReference type="KEGG" id="pfa:PF3D7_0824600"/>
<dbReference type="VEuPathDB" id="PlasmoDB:PF3D7_0824600"/>
<dbReference type="HOGENOM" id="CLU_1149165_0_0_1"/>
<dbReference type="InParanoid" id="C0H4X5"/>
<dbReference type="OMA" id="PCELLRK"/>
<dbReference type="OrthoDB" id="311633at2759"/>
<dbReference type="PhylomeDB" id="C0H4X5"/>
<dbReference type="Proteomes" id="UP000001450">
    <property type="component" value="Chromosome 8"/>
</dbReference>
<dbReference type="GO" id="GO:0005737">
    <property type="term" value="C:cytoplasm"/>
    <property type="evidence" value="ECO:0000318"/>
    <property type="project" value="GO_Central"/>
</dbReference>
<dbReference type="GO" id="GO:0005758">
    <property type="term" value="C:mitochondrial intermembrane space"/>
    <property type="evidence" value="ECO:0007669"/>
    <property type="project" value="UniProtKB-SubCell"/>
</dbReference>
<dbReference type="GO" id="GO:0051537">
    <property type="term" value="F:2 iron, 2 sulfur cluster binding"/>
    <property type="evidence" value="ECO:0007669"/>
    <property type="project" value="UniProtKB-UniRule"/>
</dbReference>
<dbReference type="GO" id="GO:0051539">
    <property type="term" value="F:4 iron, 4 sulfur cluster binding"/>
    <property type="evidence" value="ECO:0007669"/>
    <property type="project" value="UniProtKB-KW"/>
</dbReference>
<dbReference type="GO" id="GO:0009055">
    <property type="term" value="F:electron transfer activity"/>
    <property type="evidence" value="ECO:0007669"/>
    <property type="project" value="UniProtKB-UniRule"/>
</dbReference>
<dbReference type="GO" id="GO:0046872">
    <property type="term" value="F:metal ion binding"/>
    <property type="evidence" value="ECO:0007669"/>
    <property type="project" value="UniProtKB-KW"/>
</dbReference>
<dbReference type="GO" id="GO:0016226">
    <property type="term" value="P:iron-sulfur cluster assembly"/>
    <property type="evidence" value="ECO:0000318"/>
    <property type="project" value="GO_Central"/>
</dbReference>
<dbReference type="HAMAP" id="MF_03115">
    <property type="entry name" value="Anamorsin"/>
    <property type="match status" value="1"/>
</dbReference>
<dbReference type="InterPro" id="IPR007785">
    <property type="entry name" value="Anamorsin"/>
</dbReference>
<dbReference type="InterPro" id="IPR046408">
    <property type="entry name" value="CIAPIN1"/>
</dbReference>
<dbReference type="PANTHER" id="PTHR13273">
    <property type="entry name" value="ANAMORSIN"/>
    <property type="match status" value="1"/>
</dbReference>
<dbReference type="PANTHER" id="PTHR13273:SF14">
    <property type="entry name" value="ANAMORSIN"/>
    <property type="match status" value="1"/>
</dbReference>
<dbReference type="Pfam" id="PF05093">
    <property type="entry name" value="CIAPIN1"/>
    <property type="match status" value="1"/>
</dbReference>
<keyword id="KW-0004">4Fe-4S</keyword>
<keyword id="KW-0963">Cytoplasm</keyword>
<keyword id="KW-0408">Iron</keyword>
<keyword id="KW-0411">Iron-sulfur</keyword>
<keyword id="KW-0479">Metal-binding</keyword>
<keyword id="KW-0496">Mitochondrion</keyword>
<keyword id="KW-1185">Reference proteome</keyword>
<evidence type="ECO:0000255" key="1">
    <source>
        <dbReference type="HAMAP-Rule" id="MF_03115"/>
    </source>
</evidence>
<comment type="function">
    <text evidence="1">Component of the cytosolic iron-sulfur (Fe-S) protein assembly (CIA) machinery. Required for the maturation of extramitochondrial Fe-S proteins. Part of an electron transfer chain functioning in an early step of cytosolic Fe-S biogenesis, facilitating the de novo assembly of a [4Fe-4S] cluster on the cytosolic Fe-S scaffold complex. Electrons are transferred from NADPH via a FAD- and FMN-containing diflavin oxidoreductase. Together with the diflavin oxidoreductase, also required for the assembly of the diferric tyrosyl radical cofactor of ribonucleotide reductase (RNR), probably by providing electrons for reduction during radical cofactor maturation in the catalytic small subunit.</text>
</comment>
<comment type="cofactor">
    <cofactor evidence="1">
        <name>[4Fe-4S] cluster</name>
        <dbReference type="ChEBI" id="CHEBI:49883"/>
    </cofactor>
</comment>
<comment type="subunit">
    <text evidence="1">Monomer.</text>
</comment>
<comment type="subcellular location">
    <subcellularLocation>
        <location evidence="1">Cytoplasm</location>
    </subcellularLocation>
    <subcellularLocation>
        <location evidence="1">Mitochondrion intermembrane space</location>
    </subcellularLocation>
</comment>
<comment type="domain">
    <text evidence="1">The C-terminal domain binds 2 Fe-S clusters but is otherwise mostly in an intrinsically disordered conformation.</text>
</comment>
<comment type="domain">
    <text evidence="1">The N-terminal domain has structural similarity with S-adenosyl-L-methionine-dependent methyltransferases, but does not bind S-adenosyl-L-methionine. It is required for correct assembly of the 2 Fe-S clusters.</text>
</comment>
<comment type="domain">
    <text evidence="1">The twin Cx2C motifs are involved in the recognition by the mitochondrial MIA40-ERV1 disulfide relay system. The formation of 2 disulfide bonds in the Cx2C motifs through dithiol/disulfide exchange reactions effectively traps the protein in the mitochondrial intermembrane space.</text>
</comment>
<comment type="similarity">
    <text evidence="1">Belongs to the anamorsin family.</text>
</comment>
<accession>C0H4X5</accession>
<feature type="chain" id="PRO_0000392356" description="Anamorsin homolog">
    <location>
        <begin position="1"/>
        <end position="266"/>
    </location>
</feature>
<feature type="region of interest" description="N-terminal SAM-like domain" evidence="1">
    <location>
        <begin position="1"/>
        <end position="164"/>
    </location>
</feature>
<feature type="region of interest" description="Linker" evidence="1">
    <location>
        <begin position="165"/>
        <end position="185"/>
    </location>
</feature>
<feature type="region of interest" description="Fe-S binding site B" evidence="1">
    <location>
        <begin position="229"/>
        <end position="243"/>
    </location>
</feature>
<feature type="short sequence motif" description="Cx2C motif 1" evidence="1">
    <location>
        <begin position="229"/>
        <end position="232"/>
    </location>
</feature>
<feature type="short sequence motif" description="Cx2C motif 2" evidence="1">
    <location>
        <begin position="240"/>
        <end position="243"/>
    </location>
</feature>
<feature type="binding site" evidence="1">
    <location>
        <position position="229"/>
    </location>
    <ligand>
        <name>[4Fe-4S] cluster</name>
        <dbReference type="ChEBI" id="CHEBI:49883"/>
    </ligand>
</feature>
<feature type="binding site" evidence="1">
    <location>
        <position position="232"/>
    </location>
    <ligand>
        <name>[4Fe-4S] cluster</name>
        <dbReference type="ChEBI" id="CHEBI:49883"/>
    </ligand>
</feature>
<feature type="binding site" evidence="1">
    <location>
        <position position="240"/>
    </location>
    <ligand>
        <name>[4Fe-4S] cluster</name>
        <dbReference type="ChEBI" id="CHEBI:49883"/>
    </ligand>
</feature>
<feature type="binding site" evidence="1">
    <location>
        <position position="243"/>
    </location>
    <ligand>
        <name>[4Fe-4S] cluster</name>
        <dbReference type="ChEBI" id="CHEBI:49883"/>
    </ligand>
</feature>
<protein>
    <recommendedName>
        <fullName evidence="1">Anamorsin homolog</fullName>
    </recommendedName>
    <alternativeName>
        <fullName evidence="1">Fe-S cluster assembly protein DRE2 homolog</fullName>
    </alternativeName>
</protein>
<sequence length="266" mass="30838">MIINFVGNTLIIFNEDIPCDLLRKKYKELFVPTISVLDFKKKRLYRKYNNIFLYTYKNYSFLWELENNILHKVQKCLNKNGILKLIIYLNKNDVITPDKHENKNNNDIKVNIDQKDYCENYINDIFKNIKKECLYNGFINIVNETSVAENGIILNITAENPDFLSNEDNDVSSDDEDLYNNEDDKKKVVNRVCDNCTCGKKEKLLNSENKVLINEKDGEYITENVVSSCGNCYLGDAFRCASCPYKGLPAFQPGENVKLNLNNESN</sequence>
<proteinExistence type="inferred from homology"/>
<name>DRE2_PLAF7</name>
<gene>
    <name type="ORF">MAL8P1.31</name>
</gene>
<organism>
    <name type="scientific">Plasmodium falciparum (isolate 3D7)</name>
    <dbReference type="NCBI Taxonomy" id="36329"/>
    <lineage>
        <taxon>Eukaryota</taxon>
        <taxon>Sar</taxon>
        <taxon>Alveolata</taxon>
        <taxon>Apicomplexa</taxon>
        <taxon>Aconoidasida</taxon>
        <taxon>Haemosporida</taxon>
        <taxon>Plasmodiidae</taxon>
        <taxon>Plasmodium</taxon>
        <taxon>Plasmodium (Laverania)</taxon>
    </lineage>
</organism>